<proteinExistence type="evidence at protein level"/>
<evidence type="ECO:0000250" key="1">
    <source>
        <dbReference type="UniProtKB" id="P58453"/>
    </source>
</evidence>
<evidence type="ECO:0000255" key="2">
    <source>
        <dbReference type="PROSITE-ProRule" id="PRU00395"/>
    </source>
</evidence>
<evidence type="ECO:0000269" key="3">
    <source>
    </source>
</evidence>
<evidence type="ECO:0000269" key="4">
    <source>
    </source>
</evidence>
<evidence type="ECO:0000305" key="5"/>
<reference evidence="5" key="1">
    <citation type="journal article" date="2006" name="Biochem. J.">
        <title>A novel suite of cyclotides from Viola odorata: sequence variation and the implications for structure, function and stability.</title>
        <authorList>
            <person name="Ireland D.C."/>
            <person name="Colgrave M.L."/>
            <person name="Craik D.J."/>
        </authorList>
    </citation>
    <scope>PROTEIN SEQUENCE</scope>
    <scope>FUNCTION</scope>
    <scope>MASS SPECTROMETRY</scope>
</reference>
<reference key="2">
    <citation type="journal article" date="2017" name="J. Nat. Prod.">
        <title>Cyclotides from the Indian Medicinal Plant Viola odorata (Banafsha): Identification and Characterization.</title>
        <authorList>
            <person name="Narayani M."/>
            <person name="Chadha A."/>
            <person name="Srivastava S."/>
        </authorList>
    </citation>
    <scope>TISSUE SPECIFICITY</scope>
    <scope>IDENTIFICATION BY MASS SPECTROMETRY</scope>
</reference>
<protein>
    <recommendedName>
        <fullName>Cycloviolacin-O24</fullName>
    </recommendedName>
</protein>
<sequence>GLPTCGETCFGGTCNTPGCTCDPWPVCTHN</sequence>
<feature type="peptide" id="PRO_0000294953" description="Cycloviolacin-O24" evidence="2 3">
    <location>
        <begin position="1"/>
        <end position="30"/>
    </location>
</feature>
<feature type="disulfide bond" evidence="1 2">
    <location>
        <begin position="5"/>
        <end position="19"/>
    </location>
</feature>
<feature type="disulfide bond" evidence="1 2">
    <location>
        <begin position="9"/>
        <end position="21"/>
    </location>
</feature>
<feature type="disulfide bond" evidence="1 2">
    <location>
        <begin position="14"/>
        <end position="27"/>
    </location>
</feature>
<feature type="cross-link" description="Cyclopeptide (Gly-Asn)" evidence="3">
    <location>
        <begin position="1"/>
        <end position="30"/>
    </location>
</feature>
<name>CYO24_VIOOD</name>
<dbReference type="SMR" id="P85187"/>
<dbReference type="GO" id="GO:0006952">
    <property type="term" value="P:defense response"/>
    <property type="evidence" value="ECO:0007669"/>
    <property type="project" value="UniProtKB-KW"/>
</dbReference>
<dbReference type="GO" id="GO:0031640">
    <property type="term" value="P:killing of cells of another organism"/>
    <property type="evidence" value="ECO:0007669"/>
    <property type="project" value="UniProtKB-KW"/>
</dbReference>
<dbReference type="InterPro" id="IPR005535">
    <property type="entry name" value="Cyclotide"/>
</dbReference>
<dbReference type="InterPro" id="IPR012324">
    <property type="entry name" value="Cyclotide_moebius_CS"/>
</dbReference>
<dbReference type="InterPro" id="IPR036146">
    <property type="entry name" value="Cyclotide_sf"/>
</dbReference>
<dbReference type="Pfam" id="PF03784">
    <property type="entry name" value="Cyclotide"/>
    <property type="match status" value="1"/>
</dbReference>
<dbReference type="PIRSF" id="PIRSF037891">
    <property type="entry name" value="Cycloviolacin"/>
    <property type="match status" value="1"/>
</dbReference>
<dbReference type="SUPFAM" id="SSF57038">
    <property type="entry name" value="Cyclotides"/>
    <property type="match status" value="1"/>
</dbReference>
<dbReference type="PROSITE" id="PS51052">
    <property type="entry name" value="CYCLOTIDE"/>
    <property type="match status" value="1"/>
</dbReference>
<dbReference type="PROSITE" id="PS60009">
    <property type="entry name" value="CYCLOTIDE_MOEBIUS"/>
    <property type="match status" value="1"/>
</dbReference>
<keyword id="KW-0204">Cytolysis</keyword>
<keyword id="KW-0903">Direct protein sequencing</keyword>
<keyword id="KW-1015">Disulfide bond</keyword>
<keyword id="KW-0354">Hemolysis</keyword>
<keyword id="KW-0960">Knottin</keyword>
<keyword id="KW-0611">Plant defense</keyword>
<organism>
    <name type="scientific">Viola odorata</name>
    <name type="common">Sweet violet</name>
    <dbReference type="NCBI Taxonomy" id="97441"/>
    <lineage>
        <taxon>Eukaryota</taxon>
        <taxon>Viridiplantae</taxon>
        <taxon>Streptophyta</taxon>
        <taxon>Embryophyta</taxon>
        <taxon>Tracheophyta</taxon>
        <taxon>Spermatophyta</taxon>
        <taxon>Magnoliopsida</taxon>
        <taxon>eudicotyledons</taxon>
        <taxon>Gunneridae</taxon>
        <taxon>Pentapetalae</taxon>
        <taxon>rosids</taxon>
        <taxon>fabids</taxon>
        <taxon>Malpighiales</taxon>
        <taxon>Violaceae</taxon>
        <taxon>Viola</taxon>
        <taxon>Viola subgen. Viola</taxon>
        <taxon>Viola sect. Viola</taxon>
        <taxon>Viola subsect. Viola</taxon>
    </lineage>
</organism>
<comment type="function">
    <text evidence="2 3 5">Probably participates in a plant defense mechanism. Has hemolytic activity.</text>
</comment>
<comment type="tissue specificity">
    <text evidence="4">Expressed in leaves but not in petals, petioles, roots and runners (at protein level).</text>
</comment>
<comment type="domain">
    <text evidence="1">The presence of a 'disulfide through disulfide knot' structurally defines this protein as a knottin.</text>
</comment>
<comment type="PTM">
    <text evidence="2 3">This is a cyclic peptide.</text>
</comment>
<comment type="mass spectrometry"/>
<comment type="similarity">
    <text evidence="2">Belongs to the cyclotide family. Moebius subfamily.</text>
</comment>
<comment type="caution">
    <text evidence="3">This peptide is cyclic. The start position was chosen by similarity to OAK1 (kalata-B1) for which the DNA sequence is known.</text>
</comment>
<accession>P85187</accession>